<protein>
    <recommendedName>
        <fullName evidence="1">Large ribosomal subunit protein bL34</fullName>
    </recommendedName>
    <alternativeName>
        <fullName evidence="2">50S ribosomal protein L34</fullName>
    </alternativeName>
</protein>
<gene>
    <name evidence="1" type="primary">rpmH</name>
    <name type="ordered locus">BTH_I3238</name>
</gene>
<name>RL34_BURTA</name>
<feature type="chain" id="PRO_1000013302" description="Large ribosomal subunit protein bL34">
    <location>
        <begin position="1"/>
        <end position="44"/>
    </location>
</feature>
<evidence type="ECO:0000255" key="1">
    <source>
        <dbReference type="HAMAP-Rule" id="MF_00391"/>
    </source>
</evidence>
<evidence type="ECO:0000305" key="2"/>
<proteinExistence type="inferred from homology"/>
<comment type="similarity">
    <text evidence="1">Belongs to the bacterial ribosomal protein bL34 family.</text>
</comment>
<organism>
    <name type="scientific">Burkholderia thailandensis (strain ATCC 700388 / DSM 13276 / CCUG 48851 / CIP 106301 / E264)</name>
    <dbReference type="NCBI Taxonomy" id="271848"/>
    <lineage>
        <taxon>Bacteria</taxon>
        <taxon>Pseudomonadati</taxon>
        <taxon>Pseudomonadota</taxon>
        <taxon>Betaproteobacteria</taxon>
        <taxon>Burkholderiales</taxon>
        <taxon>Burkholderiaceae</taxon>
        <taxon>Burkholderia</taxon>
        <taxon>pseudomallei group</taxon>
    </lineage>
</organism>
<sequence>MKRTYQPSVTRRKRTHGFRVRMKTAGGRKVINARRAKGRKRLAI</sequence>
<keyword id="KW-0687">Ribonucleoprotein</keyword>
<keyword id="KW-0689">Ribosomal protein</keyword>
<dbReference type="EMBL" id="CP000086">
    <property type="protein sequence ID" value="ABC36852.1"/>
    <property type="molecule type" value="Genomic_DNA"/>
</dbReference>
<dbReference type="RefSeq" id="WP_004198824.1">
    <property type="nucleotide sequence ID" value="NZ_CP008785.1"/>
</dbReference>
<dbReference type="SMR" id="Q2STL7"/>
<dbReference type="GeneID" id="98107775"/>
<dbReference type="KEGG" id="bte:BTH_I3238"/>
<dbReference type="HOGENOM" id="CLU_129938_2_0_4"/>
<dbReference type="Proteomes" id="UP000001930">
    <property type="component" value="Chromosome I"/>
</dbReference>
<dbReference type="GO" id="GO:1990904">
    <property type="term" value="C:ribonucleoprotein complex"/>
    <property type="evidence" value="ECO:0007669"/>
    <property type="project" value="UniProtKB-KW"/>
</dbReference>
<dbReference type="GO" id="GO:0005840">
    <property type="term" value="C:ribosome"/>
    <property type="evidence" value="ECO:0007669"/>
    <property type="project" value="UniProtKB-KW"/>
</dbReference>
<dbReference type="GO" id="GO:0003735">
    <property type="term" value="F:structural constituent of ribosome"/>
    <property type="evidence" value="ECO:0007669"/>
    <property type="project" value="InterPro"/>
</dbReference>
<dbReference type="GO" id="GO:0006412">
    <property type="term" value="P:translation"/>
    <property type="evidence" value="ECO:0007669"/>
    <property type="project" value="UniProtKB-UniRule"/>
</dbReference>
<dbReference type="FunFam" id="1.10.287.3980:FF:000001">
    <property type="entry name" value="Mitochondrial ribosomal protein L34"/>
    <property type="match status" value="1"/>
</dbReference>
<dbReference type="Gene3D" id="1.10.287.3980">
    <property type="match status" value="1"/>
</dbReference>
<dbReference type="HAMAP" id="MF_00391">
    <property type="entry name" value="Ribosomal_bL34"/>
    <property type="match status" value="1"/>
</dbReference>
<dbReference type="InterPro" id="IPR000271">
    <property type="entry name" value="Ribosomal_bL34"/>
</dbReference>
<dbReference type="InterPro" id="IPR020939">
    <property type="entry name" value="Ribosomal_bL34_CS"/>
</dbReference>
<dbReference type="NCBIfam" id="TIGR01030">
    <property type="entry name" value="rpmH_bact"/>
    <property type="match status" value="1"/>
</dbReference>
<dbReference type="PANTHER" id="PTHR14503:SF4">
    <property type="entry name" value="LARGE RIBOSOMAL SUBUNIT PROTEIN BL34M"/>
    <property type="match status" value="1"/>
</dbReference>
<dbReference type="PANTHER" id="PTHR14503">
    <property type="entry name" value="MITOCHONDRIAL RIBOSOMAL PROTEIN 34 FAMILY MEMBER"/>
    <property type="match status" value="1"/>
</dbReference>
<dbReference type="Pfam" id="PF00468">
    <property type="entry name" value="Ribosomal_L34"/>
    <property type="match status" value="1"/>
</dbReference>
<dbReference type="PROSITE" id="PS00784">
    <property type="entry name" value="RIBOSOMAL_L34"/>
    <property type="match status" value="1"/>
</dbReference>
<accession>Q2STL7</accession>
<reference key="1">
    <citation type="journal article" date="2005" name="BMC Genomics">
        <title>Bacterial genome adaptation to niches: divergence of the potential virulence genes in three Burkholderia species of different survival strategies.</title>
        <authorList>
            <person name="Kim H.S."/>
            <person name="Schell M.A."/>
            <person name="Yu Y."/>
            <person name="Ulrich R.L."/>
            <person name="Sarria S.H."/>
            <person name="Nierman W.C."/>
            <person name="DeShazer D."/>
        </authorList>
    </citation>
    <scope>NUCLEOTIDE SEQUENCE [LARGE SCALE GENOMIC DNA]</scope>
    <source>
        <strain>ATCC 700388 / DSM 13276 / CCUG 48851 / CIP 106301 / E264</strain>
    </source>
</reference>